<gene>
    <name type="ordered locus">Shewana3_1735</name>
</gene>
<organism>
    <name type="scientific">Shewanella sp. (strain ANA-3)</name>
    <dbReference type="NCBI Taxonomy" id="94122"/>
    <lineage>
        <taxon>Bacteria</taxon>
        <taxon>Pseudomonadati</taxon>
        <taxon>Pseudomonadota</taxon>
        <taxon>Gammaproteobacteria</taxon>
        <taxon>Alteromonadales</taxon>
        <taxon>Shewanellaceae</taxon>
        <taxon>Shewanella</taxon>
    </lineage>
</organism>
<feature type="chain" id="PRO_0000316738" description="Putative phosphoenolpyruvate synthase regulatory protein">
    <location>
        <begin position="1"/>
        <end position="270"/>
    </location>
</feature>
<feature type="binding site" evidence="1">
    <location>
        <begin position="150"/>
        <end position="157"/>
    </location>
    <ligand>
        <name>ADP</name>
        <dbReference type="ChEBI" id="CHEBI:456216"/>
    </ligand>
</feature>
<name>PSRP_SHESA</name>
<protein>
    <recommendedName>
        <fullName evidence="1">Putative phosphoenolpyruvate synthase regulatory protein</fullName>
        <shortName evidence="1">PEP synthase regulatory protein</shortName>
        <shortName evidence="1">PSRP</shortName>
        <ecNumber evidence="1">2.7.11.33</ecNumber>
        <ecNumber evidence="1">2.7.4.28</ecNumber>
    </recommendedName>
    <alternativeName>
        <fullName evidence="1">Pyruvate, water dikinase regulatory protein</fullName>
    </alternativeName>
</protein>
<dbReference type="EC" id="2.7.11.33" evidence="1"/>
<dbReference type="EC" id="2.7.4.28" evidence="1"/>
<dbReference type="EMBL" id="CP000469">
    <property type="protein sequence ID" value="ABK47968.1"/>
    <property type="molecule type" value="Genomic_DNA"/>
</dbReference>
<dbReference type="RefSeq" id="WP_011622371.1">
    <property type="nucleotide sequence ID" value="NC_008577.1"/>
</dbReference>
<dbReference type="SMR" id="A0KVZ9"/>
<dbReference type="STRING" id="94122.Shewana3_1735"/>
<dbReference type="KEGG" id="shn:Shewana3_1735"/>
<dbReference type="eggNOG" id="COG1806">
    <property type="taxonomic scope" value="Bacteria"/>
</dbReference>
<dbReference type="HOGENOM" id="CLU_046206_1_0_6"/>
<dbReference type="OrthoDB" id="9782201at2"/>
<dbReference type="Proteomes" id="UP000002589">
    <property type="component" value="Chromosome"/>
</dbReference>
<dbReference type="GO" id="GO:0043531">
    <property type="term" value="F:ADP binding"/>
    <property type="evidence" value="ECO:0007669"/>
    <property type="project" value="UniProtKB-UniRule"/>
</dbReference>
<dbReference type="GO" id="GO:0005524">
    <property type="term" value="F:ATP binding"/>
    <property type="evidence" value="ECO:0007669"/>
    <property type="project" value="InterPro"/>
</dbReference>
<dbReference type="GO" id="GO:0016776">
    <property type="term" value="F:phosphotransferase activity, phosphate group as acceptor"/>
    <property type="evidence" value="ECO:0007669"/>
    <property type="project" value="UniProtKB-UniRule"/>
</dbReference>
<dbReference type="GO" id="GO:0004674">
    <property type="term" value="F:protein serine/threonine kinase activity"/>
    <property type="evidence" value="ECO:0007669"/>
    <property type="project" value="UniProtKB-UniRule"/>
</dbReference>
<dbReference type="HAMAP" id="MF_01062">
    <property type="entry name" value="PSRP"/>
    <property type="match status" value="1"/>
</dbReference>
<dbReference type="InterPro" id="IPR005177">
    <property type="entry name" value="Kinase-pyrophosphorylase"/>
</dbReference>
<dbReference type="InterPro" id="IPR026530">
    <property type="entry name" value="PSRP"/>
</dbReference>
<dbReference type="NCBIfam" id="NF003742">
    <property type="entry name" value="PRK05339.1"/>
    <property type="match status" value="1"/>
</dbReference>
<dbReference type="PANTHER" id="PTHR31756">
    <property type="entry name" value="PYRUVATE, PHOSPHATE DIKINASE REGULATORY PROTEIN 1, CHLOROPLASTIC"/>
    <property type="match status" value="1"/>
</dbReference>
<dbReference type="PANTHER" id="PTHR31756:SF3">
    <property type="entry name" value="PYRUVATE, PHOSPHATE DIKINASE REGULATORY PROTEIN 1, CHLOROPLASTIC"/>
    <property type="match status" value="1"/>
</dbReference>
<dbReference type="Pfam" id="PF03618">
    <property type="entry name" value="Kinase-PPPase"/>
    <property type="match status" value="1"/>
</dbReference>
<accession>A0KVZ9</accession>
<keyword id="KW-0418">Kinase</keyword>
<keyword id="KW-0547">Nucleotide-binding</keyword>
<keyword id="KW-0723">Serine/threonine-protein kinase</keyword>
<keyword id="KW-0808">Transferase</keyword>
<proteinExistence type="inferred from homology"/>
<evidence type="ECO:0000255" key="1">
    <source>
        <dbReference type="HAMAP-Rule" id="MF_01062"/>
    </source>
</evidence>
<reference key="1">
    <citation type="submission" date="2006-09" db="EMBL/GenBank/DDBJ databases">
        <title>Complete sequence of chromosome 1 of Shewanella sp. ANA-3.</title>
        <authorList>
            <person name="Copeland A."/>
            <person name="Lucas S."/>
            <person name="Lapidus A."/>
            <person name="Barry K."/>
            <person name="Detter J.C."/>
            <person name="Glavina del Rio T."/>
            <person name="Hammon N."/>
            <person name="Israni S."/>
            <person name="Dalin E."/>
            <person name="Tice H."/>
            <person name="Pitluck S."/>
            <person name="Chertkov O."/>
            <person name="Brettin T."/>
            <person name="Bruce D."/>
            <person name="Han C."/>
            <person name="Tapia R."/>
            <person name="Gilna P."/>
            <person name="Schmutz J."/>
            <person name="Larimer F."/>
            <person name="Land M."/>
            <person name="Hauser L."/>
            <person name="Kyrpides N."/>
            <person name="Kim E."/>
            <person name="Newman D."/>
            <person name="Salticov C."/>
            <person name="Konstantinidis K."/>
            <person name="Klappenback J."/>
            <person name="Tiedje J."/>
            <person name="Richardson P."/>
        </authorList>
    </citation>
    <scope>NUCLEOTIDE SEQUENCE [LARGE SCALE GENOMIC DNA]</scope>
    <source>
        <strain>ANA-3</strain>
    </source>
</reference>
<sequence>MAPKVFYISDGTAITAEVFGHAVLSQFPLEFESLTIPFVETLAKAENVKRQINDCFITTGERPLVFHSIVKPEIRDIIYSSEGLDYDFLNTFVAPLEQHLGVSASPVLHRTHGKANHGYEARIDAINFAMDNDDGQTMKHMDQADLILLGVSRCGKTPSSLYLSMQFGIKAANYPFTEDDMDNLKLPEALKRNKKKLFGLTIDPVRLHEIRQSRMENSRYSSLKQCRLEVKEVEMMFKRERIPYIDTTNHSVEEIATKILDVTGLERHMF</sequence>
<comment type="function">
    <text evidence="1">Bifunctional serine/threonine kinase and phosphorylase involved in the regulation of the phosphoenolpyruvate synthase (PEPS) by catalyzing its phosphorylation/dephosphorylation.</text>
</comment>
<comment type="catalytic activity">
    <reaction evidence="1">
        <text>[pyruvate, water dikinase] + ADP = [pyruvate, water dikinase]-phosphate + AMP + H(+)</text>
        <dbReference type="Rhea" id="RHEA:46020"/>
        <dbReference type="Rhea" id="RHEA-COMP:11425"/>
        <dbReference type="Rhea" id="RHEA-COMP:11426"/>
        <dbReference type="ChEBI" id="CHEBI:15378"/>
        <dbReference type="ChEBI" id="CHEBI:43176"/>
        <dbReference type="ChEBI" id="CHEBI:68546"/>
        <dbReference type="ChEBI" id="CHEBI:456215"/>
        <dbReference type="ChEBI" id="CHEBI:456216"/>
        <dbReference type="EC" id="2.7.11.33"/>
    </reaction>
</comment>
<comment type="catalytic activity">
    <reaction evidence="1">
        <text>[pyruvate, water dikinase]-phosphate + phosphate + H(+) = [pyruvate, water dikinase] + diphosphate</text>
        <dbReference type="Rhea" id="RHEA:48580"/>
        <dbReference type="Rhea" id="RHEA-COMP:11425"/>
        <dbReference type="Rhea" id="RHEA-COMP:11426"/>
        <dbReference type="ChEBI" id="CHEBI:15378"/>
        <dbReference type="ChEBI" id="CHEBI:33019"/>
        <dbReference type="ChEBI" id="CHEBI:43176"/>
        <dbReference type="ChEBI" id="CHEBI:43474"/>
        <dbReference type="ChEBI" id="CHEBI:68546"/>
        <dbReference type="EC" id="2.7.4.28"/>
    </reaction>
</comment>
<comment type="similarity">
    <text evidence="1">Belongs to the pyruvate, phosphate/water dikinase regulatory protein family. PSRP subfamily.</text>
</comment>